<evidence type="ECO:0000255" key="1">
    <source>
        <dbReference type="HAMAP-Rule" id="MF_00555"/>
    </source>
</evidence>
<accession>Q63D03</accession>
<dbReference type="EC" id="6.3.1.1" evidence="1"/>
<dbReference type="EMBL" id="CP000001">
    <property type="protein sequence ID" value="AAU18633.1"/>
    <property type="molecule type" value="Genomic_DNA"/>
</dbReference>
<dbReference type="RefSeq" id="WP_000284908.1">
    <property type="nucleotide sequence ID" value="NZ_CP009968.1"/>
</dbReference>
<dbReference type="SMR" id="Q63D03"/>
<dbReference type="GeneID" id="69532735"/>
<dbReference type="KEGG" id="bcz:BCE33L1620"/>
<dbReference type="PATRIC" id="fig|288681.22.peg.3923"/>
<dbReference type="UniPathway" id="UPA00134">
    <property type="reaction ID" value="UER00194"/>
</dbReference>
<dbReference type="Proteomes" id="UP000002612">
    <property type="component" value="Chromosome"/>
</dbReference>
<dbReference type="GO" id="GO:0005829">
    <property type="term" value="C:cytosol"/>
    <property type="evidence" value="ECO:0007669"/>
    <property type="project" value="TreeGrafter"/>
</dbReference>
<dbReference type="GO" id="GO:0004071">
    <property type="term" value="F:aspartate-ammonia ligase activity"/>
    <property type="evidence" value="ECO:0007669"/>
    <property type="project" value="UniProtKB-UniRule"/>
</dbReference>
<dbReference type="GO" id="GO:0005524">
    <property type="term" value="F:ATP binding"/>
    <property type="evidence" value="ECO:0007669"/>
    <property type="project" value="UniProtKB-UniRule"/>
</dbReference>
<dbReference type="GO" id="GO:0140096">
    <property type="term" value="F:catalytic activity, acting on a protein"/>
    <property type="evidence" value="ECO:0007669"/>
    <property type="project" value="UniProtKB-ARBA"/>
</dbReference>
<dbReference type="GO" id="GO:0016740">
    <property type="term" value="F:transferase activity"/>
    <property type="evidence" value="ECO:0007669"/>
    <property type="project" value="UniProtKB-ARBA"/>
</dbReference>
<dbReference type="GO" id="GO:0070981">
    <property type="term" value="P:L-asparagine biosynthetic process"/>
    <property type="evidence" value="ECO:0007669"/>
    <property type="project" value="UniProtKB-UniRule"/>
</dbReference>
<dbReference type="CDD" id="cd00645">
    <property type="entry name" value="AsnA"/>
    <property type="match status" value="1"/>
</dbReference>
<dbReference type="Gene3D" id="3.30.930.10">
    <property type="entry name" value="Bira Bifunctional Protein, Domain 2"/>
    <property type="match status" value="1"/>
</dbReference>
<dbReference type="HAMAP" id="MF_00555">
    <property type="entry name" value="AsnA"/>
    <property type="match status" value="1"/>
</dbReference>
<dbReference type="InterPro" id="IPR006195">
    <property type="entry name" value="aa-tRNA-synth_II"/>
</dbReference>
<dbReference type="InterPro" id="IPR045864">
    <property type="entry name" value="aa-tRNA-synth_II/BPL/LPL"/>
</dbReference>
<dbReference type="InterPro" id="IPR004618">
    <property type="entry name" value="AsnA"/>
</dbReference>
<dbReference type="NCBIfam" id="TIGR00669">
    <property type="entry name" value="asnA"/>
    <property type="match status" value="1"/>
</dbReference>
<dbReference type="PANTHER" id="PTHR30073">
    <property type="entry name" value="ASPARTATE--AMMONIA LIGASE"/>
    <property type="match status" value="1"/>
</dbReference>
<dbReference type="PANTHER" id="PTHR30073:SF5">
    <property type="entry name" value="ASPARTATE--AMMONIA LIGASE"/>
    <property type="match status" value="1"/>
</dbReference>
<dbReference type="Pfam" id="PF03590">
    <property type="entry name" value="AsnA"/>
    <property type="match status" value="1"/>
</dbReference>
<dbReference type="PIRSF" id="PIRSF001555">
    <property type="entry name" value="Asp_ammon_ligase"/>
    <property type="match status" value="1"/>
</dbReference>
<dbReference type="SUPFAM" id="SSF55681">
    <property type="entry name" value="Class II aaRS and biotin synthetases"/>
    <property type="match status" value="1"/>
</dbReference>
<dbReference type="PROSITE" id="PS50862">
    <property type="entry name" value="AA_TRNA_LIGASE_II"/>
    <property type="match status" value="1"/>
</dbReference>
<gene>
    <name evidence="1" type="primary">asnA</name>
    <name type="ordered locus">BCE33L1620</name>
</gene>
<name>ASNA_BACCZ</name>
<protein>
    <recommendedName>
        <fullName evidence="1">Aspartate--ammonia ligase</fullName>
        <ecNumber evidence="1">6.3.1.1</ecNumber>
    </recommendedName>
    <alternativeName>
        <fullName evidence="1">Asparagine synthetase A</fullName>
    </alternativeName>
</protein>
<feature type="chain" id="PRO_1000017935" description="Aspartate--ammonia ligase">
    <location>
        <begin position="1"/>
        <end position="327"/>
    </location>
</feature>
<comment type="catalytic activity">
    <reaction evidence="1">
        <text>L-aspartate + NH4(+) + ATP = L-asparagine + AMP + diphosphate + H(+)</text>
        <dbReference type="Rhea" id="RHEA:11372"/>
        <dbReference type="ChEBI" id="CHEBI:15378"/>
        <dbReference type="ChEBI" id="CHEBI:28938"/>
        <dbReference type="ChEBI" id="CHEBI:29991"/>
        <dbReference type="ChEBI" id="CHEBI:30616"/>
        <dbReference type="ChEBI" id="CHEBI:33019"/>
        <dbReference type="ChEBI" id="CHEBI:58048"/>
        <dbReference type="ChEBI" id="CHEBI:456215"/>
        <dbReference type="EC" id="6.3.1.1"/>
    </reaction>
</comment>
<comment type="pathway">
    <text evidence="1">Amino-acid biosynthesis; L-asparagine biosynthesis; L-asparagine from L-aspartate (ammonia route): step 1/1.</text>
</comment>
<comment type="subcellular location">
    <subcellularLocation>
        <location evidence="1">Cytoplasm</location>
    </subcellularLocation>
</comment>
<comment type="similarity">
    <text evidence="1">Belongs to the class-II aminoacyl-tRNA synthetase family. AsnA subfamily.</text>
</comment>
<proteinExistence type="inferred from homology"/>
<reference key="1">
    <citation type="journal article" date="2006" name="J. Bacteriol.">
        <title>Pathogenomic sequence analysis of Bacillus cereus and Bacillus thuringiensis isolates closely related to Bacillus anthracis.</title>
        <authorList>
            <person name="Han C.S."/>
            <person name="Xie G."/>
            <person name="Challacombe J.F."/>
            <person name="Altherr M.R."/>
            <person name="Bhotika S.S."/>
            <person name="Bruce D."/>
            <person name="Campbell C.S."/>
            <person name="Campbell M.L."/>
            <person name="Chen J."/>
            <person name="Chertkov O."/>
            <person name="Cleland C."/>
            <person name="Dimitrijevic M."/>
            <person name="Doggett N.A."/>
            <person name="Fawcett J.J."/>
            <person name="Glavina T."/>
            <person name="Goodwin L.A."/>
            <person name="Hill K.K."/>
            <person name="Hitchcock P."/>
            <person name="Jackson P.J."/>
            <person name="Keim P."/>
            <person name="Kewalramani A.R."/>
            <person name="Longmire J."/>
            <person name="Lucas S."/>
            <person name="Malfatti S."/>
            <person name="McMurry K."/>
            <person name="Meincke L.J."/>
            <person name="Misra M."/>
            <person name="Moseman B.L."/>
            <person name="Mundt M."/>
            <person name="Munk A.C."/>
            <person name="Okinaka R.T."/>
            <person name="Parson-Quintana B."/>
            <person name="Reilly L.P."/>
            <person name="Richardson P."/>
            <person name="Robinson D.L."/>
            <person name="Rubin E."/>
            <person name="Saunders E."/>
            <person name="Tapia R."/>
            <person name="Tesmer J.G."/>
            <person name="Thayer N."/>
            <person name="Thompson L.S."/>
            <person name="Tice H."/>
            <person name="Ticknor L.O."/>
            <person name="Wills P.L."/>
            <person name="Brettin T.S."/>
            <person name="Gilna P."/>
        </authorList>
    </citation>
    <scope>NUCLEOTIDE SEQUENCE [LARGE SCALE GENOMIC DNA]</scope>
    <source>
        <strain>ZK / E33L</strain>
    </source>
</reference>
<sequence>MYQSLMTVRETQIAIKEVKTFFEDQLAKRLELFRVSAPLFVTKKSGLNDHLNGVERPIEFDMLHSGEELEIVHSLAKWKRFALHEYGYEAGEGLYTNMNAIRRDEELDATHSIYVDQWDWEKIVQKEWRTVDYLQKTVLTIYGIFKDLEDHLFEKYPFLGKYLPEEIVFVTSQELEDKYPELTPKDREHAIAKEHGAVFIIGIGDALRSGEKHDGRAADYDDWKLNGDILFWHPVLQSSFELSSMGIRVDSKSLDEQLTKTGEDFKREYDFHKGILEDVLPLTIGGGIGQSRMCMYFLRKAHIGEVQSSVWPDDLREACKKENIHLF</sequence>
<keyword id="KW-0028">Amino-acid biosynthesis</keyword>
<keyword id="KW-0061">Asparagine biosynthesis</keyword>
<keyword id="KW-0067">ATP-binding</keyword>
<keyword id="KW-0963">Cytoplasm</keyword>
<keyword id="KW-0436">Ligase</keyword>
<keyword id="KW-0547">Nucleotide-binding</keyword>
<organism>
    <name type="scientific">Bacillus cereus (strain ZK / E33L)</name>
    <dbReference type="NCBI Taxonomy" id="288681"/>
    <lineage>
        <taxon>Bacteria</taxon>
        <taxon>Bacillati</taxon>
        <taxon>Bacillota</taxon>
        <taxon>Bacilli</taxon>
        <taxon>Bacillales</taxon>
        <taxon>Bacillaceae</taxon>
        <taxon>Bacillus</taxon>
        <taxon>Bacillus cereus group</taxon>
    </lineage>
</organism>